<name>NUDC_YERE8</name>
<comment type="function">
    <text evidence="1">mRNA decapping enzyme that specifically removes the nicotinamide adenine dinucleotide (NAD) cap from a subset of mRNAs by hydrolyzing the diphosphate linkage to produce nicotinamide mononucleotide (NMN) and 5' monophosphate mRNA. The NAD-cap is present at the 5'-end of some mRNAs and stabilizes RNA against 5'-processing. Has preference for mRNAs with a 5'-end purine. Catalyzes the hydrolysis of a broad range of dinucleotide pyrophosphates.</text>
</comment>
<comment type="catalytic activity">
    <reaction evidence="1">
        <text>a 5'-end NAD(+)-phospho-ribonucleoside in mRNA + H2O = a 5'-end phospho-adenosine-phospho-ribonucleoside in mRNA + beta-nicotinamide D-ribonucleotide + 2 H(+)</text>
        <dbReference type="Rhea" id="RHEA:60876"/>
        <dbReference type="Rhea" id="RHEA-COMP:15698"/>
        <dbReference type="Rhea" id="RHEA-COMP:15719"/>
        <dbReference type="ChEBI" id="CHEBI:14649"/>
        <dbReference type="ChEBI" id="CHEBI:15377"/>
        <dbReference type="ChEBI" id="CHEBI:15378"/>
        <dbReference type="ChEBI" id="CHEBI:144029"/>
        <dbReference type="ChEBI" id="CHEBI:144051"/>
    </reaction>
    <physiologicalReaction direction="left-to-right" evidence="1">
        <dbReference type="Rhea" id="RHEA:60877"/>
    </physiologicalReaction>
</comment>
<comment type="catalytic activity">
    <reaction evidence="1">
        <text>NAD(+) + H2O = beta-nicotinamide D-ribonucleotide + AMP + 2 H(+)</text>
        <dbReference type="Rhea" id="RHEA:11800"/>
        <dbReference type="ChEBI" id="CHEBI:14649"/>
        <dbReference type="ChEBI" id="CHEBI:15377"/>
        <dbReference type="ChEBI" id="CHEBI:15378"/>
        <dbReference type="ChEBI" id="CHEBI:57540"/>
        <dbReference type="ChEBI" id="CHEBI:456215"/>
        <dbReference type="EC" id="3.6.1.22"/>
    </reaction>
</comment>
<comment type="catalytic activity">
    <reaction evidence="1">
        <text>NADH + H2O = reduced beta-nicotinamide D-ribonucleotide + AMP + 2 H(+)</text>
        <dbReference type="Rhea" id="RHEA:48868"/>
        <dbReference type="ChEBI" id="CHEBI:15377"/>
        <dbReference type="ChEBI" id="CHEBI:15378"/>
        <dbReference type="ChEBI" id="CHEBI:57945"/>
        <dbReference type="ChEBI" id="CHEBI:90832"/>
        <dbReference type="ChEBI" id="CHEBI:456215"/>
        <dbReference type="EC" id="3.6.1.22"/>
    </reaction>
</comment>
<comment type="cofactor">
    <cofactor evidence="1">
        <name>Mg(2+)</name>
        <dbReference type="ChEBI" id="CHEBI:18420"/>
    </cofactor>
    <cofactor evidence="1">
        <name>Mn(2+)</name>
        <dbReference type="ChEBI" id="CHEBI:29035"/>
    </cofactor>
    <text evidence="1">Divalent metal cations. Mg(2+) or Mn(2+).</text>
</comment>
<comment type="cofactor">
    <cofactor evidence="1">
        <name>Zn(2+)</name>
        <dbReference type="ChEBI" id="CHEBI:29105"/>
    </cofactor>
    <text evidence="1">Binds 1 zinc ion per subunit.</text>
</comment>
<comment type="subunit">
    <text evidence="1">Homodimer.</text>
</comment>
<comment type="similarity">
    <text evidence="1">Belongs to the Nudix hydrolase family. NudC subfamily.</text>
</comment>
<keyword id="KW-0378">Hydrolase</keyword>
<keyword id="KW-0460">Magnesium</keyword>
<keyword id="KW-0464">Manganese</keyword>
<keyword id="KW-0479">Metal-binding</keyword>
<keyword id="KW-0520">NAD</keyword>
<keyword id="KW-0862">Zinc</keyword>
<accession>A1JIJ0</accession>
<reference key="1">
    <citation type="journal article" date="2006" name="PLoS Genet.">
        <title>The complete genome sequence and comparative genome analysis of the high pathogenicity Yersinia enterocolitica strain 8081.</title>
        <authorList>
            <person name="Thomson N.R."/>
            <person name="Howard S."/>
            <person name="Wren B.W."/>
            <person name="Holden M.T.G."/>
            <person name="Crossman L."/>
            <person name="Challis G.L."/>
            <person name="Churcher C."/>
            <person name="Mungall K."/>
            <person name="Brooks K."/>
            <person name="Chillingworth T."/>
            <person name="Feltwell T."/>
            <person name="Abdellah Z."/>
            <person name="Hauser H."/>
            <person name="Jagels K."/>
            <person name="Maddison M."/>
            <person name="Moule S."/>
            <person name="Sanders M."/>
            <person name="Whitehead S."/>
            <person name="Quail M.A."/>
            <person name="Dougan G."/>
            <person name="Parkhill J."/>
            <person name="Prentice M.B."/>
        </authorList>
    </citation>
    <scope>NUCLEOTIDE SEQUENCE [LARGE SCALE GENOMIC DNA]</scope>
    <source>
        <strain>NCTC 13174 / 8081</strain>
    </source>
</reference>
<organism>
    <name type="scientific">Yersinia enterocolitica serotype O:8 / biotype 1B (strain NCTC 13174 / 8081)</name>
    <dbReference type="NCBI Taxonomy" id="393305"/>
    <lineage>
        <taxon>Bacteria</taxon>
        <taxon>Pseudomonadati</taxon>
        <taxon>Pseudomonadota</taxon>
        <taxon>Gammaproteobacteria</taxon>
        <taxon>Enterobacterales</taxon>
        <taxon>Yersiniaceae</taxon>
        <taxon>Yersinia</taxon>
    </lineage>
</organism>
<gene>
    <name evidence="1" type="primary">nudC</name>
    <name type="ordered locus">YE0296</name>
</gene>
<sequence>MELQLTGKESGWWIVSHENKLWLPKGELPQGNAANWSLQGATARQIGEWQGQAVWLIRQMMSTDMGSVRQLLDVDRGLFQLAGRGVQLAEFYRSHRYCGYCGHQMHASRTEWACLCNHCRERYYPQIAPCVIVAIRRGDEILLAQHVRHRGGINTVLAGFVEVGETLEQAVSREVLEESNIHIKNLRYVTSQPWPFPHSLMMAFMAEYDSGELRHDPKELLNAGWYRYDQLPLLPPPGTVARRLIEDTVVLCREEQFDDGE</sequence>
<evidence type="ECO:0000255" key="1">
    <source>
        <dbReference type="HAMAP-Rule" id="MF_00297"/>
    </source>
</evidence>
<dbReference type="EC" id="3.6.1.-" evidence="1"/>
<dbReference type="EC" id="3.6.1.22" evidence="1"/>
<dbReference type="EMBL" id="AM286415">
    <property type="protein sequence ID" value="CAL10428.1"/>
    <property type="molecule type" value="Genomic_DNA"/>
</dbReference>
<dbReference type="RefSeq" id="WP_005166081.1">
    <property type="nucleotide sequence ID" value="NC_008800.1"/>
</dbReference>
<dbReference type="RefSeq" id="YP_001004677.1">
    <property type="nucleotide sequence ID" value="NC_008800.1"/>
</dbReference>
<dbReference type="SMR" id="A1JIJ0"/>
<dbReference type="GeneID" id="31411445"/>
<dbReference type="KEGG" id="yen:YE0296"/>
<dbReference type="PATRIC" id="fig|393305.7.peg.388"/>
<dbReference type="eggNOG" id="COG2816">
    <property type="taxonomic scope" value="Bacteria"/>
</dbReference>
<dbReference type="HOGENOM" id="CLU_037162_0_1_6"/>
<dbReference type="OrthoDB" id="9791656at2"/>
<dbReference type="Proteomes" id="UP000000642">
    <property type="component" value="Chromosome"/>
</dbReference>
<dbReference type="GO" id="GO:0005829">
    <property type="term" value="C:cytosol"/>
    <property type="evidence" value="ECO:0007669"/>
    <property type="project" value="TreeGrafter"/>
</dbReference>
<dbReference type="GO" id="GO:0000287">
    <property type="term" value="F:magnesium ion binding"/>
    <property type="evidence" value="ECO:0007669"/>
    <property type="project" value="UniProtKB-UniRule"/>
</dbReference>
<dbReference type="GO" id="GO:0030145">
    <property type="term" value="F:manganese ion binding"/>
    <property type="evidence" value="ECO:0007669"/>
    <property type="project" value="UniProtKB-UniRule"/>
</dbReference>
<dbReference type="GO" id="GO:0000210">
    <property type="term" value="F:NAD+ diphosphatase activity"/>
    <property type="evidence" value="ECO:0007669"/>
    <property type="project" value="UniProtKB-UniRule"/>
</dbReference>
<dbReference type="GO" id="GO:0035529">
    <property type="term" value="F:NADH pyrophosphatase activity"/>
    <property type="evidence" value="ECO:0007669"/>
    <property type="project" value="TreeGrafter"/>
</dbReference>
<dbReference type="GO" id="GO:0110153">
    <property type="term" value="F:RNA NAD-cap (NMN-forming) hydrolase activity"/>
    <property type="evidence" value="ECO:0007669"/>
    <property type="project" value="RHEA"/>
</dbReference>
<dbReference type="GO" id="GO:0008270">
    <property type="term" value="F:zinc ion binding"/>
    <property type="evidence" value="ECO:0007669"/>
    <property type="project" value="UniProtKB-UniRule"/>
</dbReference>
<dbReference type="GO" id="GO:0019677">
    <property type="term" value="P:NAD catabolic process"/>
    <property type="evidence" value="ECO:0007669"/>
    <property type="project" value="TreeGrafter"/>
</dbReference>
<dbReference type="GO" id="GO:0006734">
    <property type="term" value="P:NADH metabolic process"/>
    <property type="evidence" value="ECO:0007669"/>
    <property type="project" value="TreeGrafter"/>
</dbReference>
<dbReference type="GO" id="GO:0006742">
    <property type="term" value="P:NADP catabolic process"/>
    <property type="evidence" value="ECO:0007669"/>
    <property type="project" value="TreeGrafter"/>
</dbReference>
<dbReference type="CDD" id="cd03429">
    <property type="entry name" value="NUDIX_NADH_pyrophosphatase_Nudt13"/>
    <property type="match status" value="1"/>
</dbReference>
<dbReference type="FunFam" id="3.90.79.10:FF:000004">
    <property type="entry name" value="NADH pyrophosphatase"/>
    <property type="match status" value="1"/>
</dbReference>
<dbReference type="FunFam" id="3.90.79.20:FF:000001">
    <property type="entry name" value="NADH pyrophosphatase"/>
    <property type="match status" value="1"/>
</dbReference>
<dbReference type="Gene3D" id="3.90.79.20">
    <property type="match status" value="1"/>
</dbReference>
<dbReference type="Gene3D" id="3.90.79.10">
    <property type="entry name" value="Nucleoside Triphosphate Pyrophosphohydrolase"/>
    <property type="match status" value="1"/>
</dbReference>
<dbReference type="HAMAP" id="MF_00297">
    <property type="entry name" value="Nudix_NudC"/>
    <property type="match status" value="1"/>
</dbReference>
<dbReference type="InterPro" id="IPR050241">
    <property type="entry name" value="NAD-cap_RNA_hydrolase_NudC"/>
</dbReference>
<dbReference type="InterPro" id="IPR049734">
    <property type="entry name" value="NudC-like_C"/>
</dbReference>
<dbReference type="InterPro" id="IPR015797">
    <property type="entry name" value="NUDIX_hydrolase-like_dom_sf"/>
</dbReference>
<dbReference type="InterPro" id="IPR020084">
    <property type="entry name" value="NUDIX_hydrolase_CS"/>
</dbReference>
<dbReference type="InterPro" id="IPR000086">
    <property type="entry name" value="NUDIX_hydrolase_dom"/>
</dbReference>
<dbReference type="InterPro" id="IPR022925">
    <property type="entry name" value="RNA_Hydrolase_NudC"/>
</dbReference>
<dbReference type="InterPro" id="IPR015376">
    <property type="entry name" value="Znr_NADH_PPase"/>
</dbReference>
<dbReference type="NCBIfam" id="NF001299">
    <property type="entry name" value="PRK00241.1"/>
    <property type="match status" value="1"/>
</dbReference>
<dbReference type="PANTHER" id="PTHR42904:SF6">
    <property type="entry name" value="NAD-CAPPED RNA HYDROLASE NUDT12"/>
    <property type="match status" value="1"/>
</dbReference>
<dbReference type="PANTHER" id="PTHR42904">
    <property type="entry name" value="NUDIX HYDROLASE, NUDC SUBFAMILY"/>
    <property type="match status" value="1"/>
</dbReference>
<dbReference type="Pfam" id="PF00293">
    <property type="entry name" value="NUDIX"/>
    <property type="match status" value="1"/>
</dbReference>
<dbReference type="Pfam" id="PF09297">
    <property type="entry name" value="Zn_ribbon_NUD"/>
    <property type="match status" value="1"/>
</dbReference>
<dbReference type="SUPFAM" id="SSF55811">
    <property type="entry name" value="Nudix"/>
    <property type="match status" value="2"/>
</dbReference>
<dbReference type="PROSITE" id="PS51462">
    <property type="entry name" value="NUDIX"/>
    <property type="match status" value="1"/>
</dbReference>
<dbReference type="PROSITE" id="PS00893">
    <property type="entry name" value="NUDIX_BOX"/>
    <property type="match status" value="1"/>
</dbReference>
<proteinExistence type="inferred from homology"/>
<feature type="chain" id="PRO_1000021916" description="NAD-capped RNA hydrolase NudC">
    <location>
        <begin position="1"/>
        <end position="261"/>
    </location>
</feature>
<feature type="domain" description="Nudix hydrolase" evidence="1">
    <location>
        <begin position="125"/>
        <end position="248"/>
    </location>
</feature>
<feature type="short sequence motif" description="Nudix box" evidence="1">
    <location>
        <begin position="159"/>
        <end position="180"/>
    </location>
</feature>
<feature type="binding site" evidence="1">
    <location>
        <position position="25"/>
    </location>
    <ligand>
        <name>substrate</name>
    </ligand>
</feature>
<feature type="binding site" evidence="1">
    <location>
        <position position="69"/>
    </location>
    <ligand>
        <name>substrate</name>
    </ligand>
</feature>
<feature type="binding site" evidence="1">
    <location>
        <position position="98"/>
    </location>
    <ligand>
        <name>Zn(2+)</name>
        <dbReference type="ChEBI" id="CHEBI:29105"/>
    </ligand>
</feature>
<feature type="binding site" evidence="1">
    <location>
        <position position="101"/>
    </location>
    <ligand>
        <name>Zn(2+)</name>
        <dbReference type="ChEBI" id="CHEBI:29105"/>
    </ligand>
</feature>
<feature type="binding site" evidence="1">
    <location>
        <position position="111"/>
    </location>
    <ligand>
        <name>substrate</name>
    </ligand>
</feature>
<feature type="binding site" evidence="1">
    <location>
        <position position="116"/>
    </location>
    <ligand>
        <name>Zn(2+)</name>
        <dbReference type="ChEBI" id="CHEBI:29105"/>
    </ligand>
</feature>
<feature type="binding site" evidence="1">
    <location>
        <position position="119"/>
    </location>
    <ligand>
        <name>Zn(2+)</name>
        <dbReference type="ChEBI" id="CHEBI:29105"/>
    </ligand>
</feature>
<feature type="binding site" evidence="1">
    <location>
        <position position="124"/>
    </location>
    <ligand>
        <name>substrate</name>
    </ligand>
</feature>
<feature type="binding site" evidence="1">
    <location>
        <position position="158"/>
    </location>
    <ligand>
        <name>a divalent metal cation</name>
        <dbReference type="ChEBI" id="CHEBI:60240"/>
        <label>1</label>
    </ligand>
</feature>
<feature type="binding site" evidence="1">
    <location>
        <position position="174"/>
    </location>
    <ligand>
        <name>a divalent metal cation</name>
        <dbReference type="ChEBI" id="CHEBI:60240"/>
        <label>2</label>
    </ligand>
</feature>
<feature type="binding site" evidence="1">
    <location>
        <position position="174"/>
    </location>
    <ligand>
        <name>a divalent metal cation</name>
        <dbReference type="ChEBI" id="CHEBI:60240"/>
        <label>3</label>
    </ligand>
</feature>
<feature type="binding site" evidence="1">
    <location>
        <position position="178"/>
    </location>
    <ligand>
        <name>a divalent metal cation</name>
        <dbReference type="ChEBI" id="CHEBI:60240"/>
        <label>1</label>
    </ligand>
</feature>
<feature type="binding site" evidence="1">
    <location>
        <position position="178"/>
    </location>
    <ligand>
        <name>a divalent metal cation</name>
        <dbReference type="ChEBI" id="CHEBI:60240"/>
        <label>3</label>
    </ligand>
</feature>
<feature type="binding site" evidence="1">
    <location>
        <begin position="192"/>
        <end position="199"/>
    </location>
    <ligand>
        <name>substrate</name>
    </ligand>
</feature>
<feature type="binding site" evidence="1">
    <location>
        <position position="219"/>
    </location>
    <ligand>
        <name>a divalent metal cation</name>
        <dbReference type="ChEBI" id="CHEBI:60240"/>
        <label>1</label>
    </ligand>
</feature>
<feature type="binding site" evidence="1">
    <location>
        <position position="219"/>
    </location>
    <ligand>
        <name>a divalent metal cation</name>
        <dbReference type="ChEBI" id="CHEBI:60240"/>
        <label>3</label>
    </ligand>
</feature>
<feature type="binding site" evidence="1">
    <location>
        <position position="241"/>
    </location>
    <ligand>
        <name>substrate</name>
    </ligand>
</feature>
<protein>
    <recommendedName>
        <fullName evidence="1">NAD-capped RNA hydrolase NudC</fullName>
        <shortName evidence="1">DeNADding enzyme NudC</shortName>
        <ecNumber evidence="1">3.6.1.-</ecNumber>
    </recommendedName>
    <alternativeName>
        <fullName evidence="1">NADH pyrophosphatase</fullName>
        <ecNumber evidence="1">3.6.1.22</ecNumber>
    </alternativeName>
</protein>